<dbReference type="EMBL" id="CP000922">
    <property type="protein sequence ID" value="ACJ32984.1"/>
    <property type="molecule type" value="Genomic_DNA"/>
</dbReference>
<dbReference type="SMR" id="B7GH28"/>
<dbReference type="STRING" id="491915.Aflv_0603"/>
<dbReference type="GeneID" id="7036860"/>
<dbReference type="KEGG" id="afl:Aflv_0603"/>
<dbReference type="PATRIC" id="fig|491915.6.peg.620"/>
<dbReference type="eggNOG" id="COG0218">
    <property type="taxonomic scope" value="Bacteria"/>
</dbReference>
<dbReference type="HOGENOM" id="CLU_033732_3_0_9"/>
<dbReference type="Proteomes" id="UP000000742">
    <property type="component" value="Chromosome"/>
</dbReference>
<dbReference type="GO" id="GO:0005829">
    <property type="term" value="C:cytosol"/>
    <property type="evidence" value="ECO:0007669"/>
    <property type="project" value="TreeGrafter"/>
</dbReference>
<dbReference type="GO" id="GO:0005525">
    <property type="term" value="F:GTP binding"/>
    <property type="evidence" value="ECO:0007669"/>
    <property type="project" value="UniProtKB-UniRule"/>
</dbReference>
<dbReference type="GO" id="GO:0046872">
    <property type="term" value="F:metal ion binding"/>
    <property type="evidence" value="ECO:0007669"/>
    <property type="project" value="UniProtKB-KW"/>
</dbReference>
<dbReference type="GO" id="GO:0000917">
    <property type="term" value="P:division septum assembly"/>
    <property type="evidence" value="ECO:0007669"/>
    <property type="project" value="UniProtKB-KW"/>
</dbReference>
<dbReference type="CDD" id="cd01876">
    <property type="entry name" value="YihA_EngB"/>
    <property type="match status" value="1"/>
</dbReference>
<dbReference type="FunFam" id="3.40.50.300:FF:000098">
    <property type="entry name" value="Probable GTP-binding protein EngB"/>
    <property type="match status" value="1"/>
</dbReference>
<dbReference type="Gene3D" id="3.40.50.300">
    <property type="entry name" value="P-loop containing nucleotide triphosphate hydrolases"/>
    <property type="match status" value="1"/>
</dbReference>
<dbReference type="HAMAP" id="MF_00321">
    <property type="entry name" value="GTPase_EngB"/>
    <property type="match status" value="1"/>
</dbReference>
<dbReference type="InterPro" id="IPR030393">
    <property type="entry name" value="G_ENGB_dom"/>
</dbReference>
<dbReference type="InterPro" id="IPR006073">
    <property type="entry name" value="GTP-bd"/>
</dbReference>
<dbReference type="InterPro" id="IPR019987">
    <property type="entry name" value="GTP-bd_ribosome_bio_YsxC"/>
</dbReference>
<dbReference type="InterPro" id="IPR027417">
    <property type="entry name" value="P-loop_NTPase"/>
</dbReference>
<dbReference type="NCBIfam" id="TIGR03598">
    <property type="entry name" value="GTPase_YsxC"/>
    <property type="match status" value="1"/>
</dbReference>
<dbReference type="PANTHER" id="PTHR11649:SF13">
    <property type="entry name" value="ENGB-TYPE G DOMAIN-CONTAINING PROTEIN"/>
    <property type="match status" value="1"/>
</dbReference>
<dbReference type="PANTHER" id="PTHR11649">
    <property type="entry name" value="MSS1/TRME-RELATED GTP-BINDING PROTEIN"/>
    <property type="match status" value="1"/>
</dbReference>
<dbReference type="Pfam" id="PF01926">
    <property type="entry name" value="MMR_HSR1"/>
    <property type="match status" value="1"/>
</dbReference>
<dbReference type="SUPFAM" id="SSF52540">
    <property type="entry name" value="P-loop containing nucleoside triphosphate hydrolases"/>
    <property type="match status" value="1"/>
</dbReference>
<dbReference type="PROSITE" id="PS51706">
    <property type="entry name" value="G_ENGB"/>
    <property type="match status" value="1"/>
</dbReference>
<protein>
    <recommendedName>
        <fullName evidence="1">Probable GTP-binding protein EngB</fullName>
    </recommendedName>
</protein>
<name>ENGB_ANOFW</name>
<gene>
    <name evidence="1" type="primary">engB</name>
    <name type="ordered locus">Aflv_0603</name>
</gene>
<proteinExistence type="inferred from homology"/>
<reference key="1">
    <citation type="journal article" date="2008" name="Genome Biol.">
        <title>Encapsulated in silica: genome, proteome and physiology of the thermophilic bacterium Anoxybacillus flavithermus WK1.</title>
        <authorList>
            <person name="Saw J.H."/>
            <person name="Mountain B.W."/>
            <person name="Feng L."/>
            <person name="Omelchenko M.V."/>
            <person name="Hou S."/>
            <person name="Saito J.A."/>
            <person name="Stott M.B."/>
            <person name="Li D."/>
            <person name="Zhao G."/>
            <person name="Wu J."/>
            <person name="Galperin M.Y."/>
            <person name="Koonin E.V."/>
            <person name="Makarova K.S."/>
            <person name="Wolf Y.I."/>
            <person name="Rigden D.J."/>
            <person name="Dunfield P.F."/>
            <person name="Wang L."/>
            <person name="Alam M."/>
        </authorList>
    </citation>
    <scope>NUCLEOTIDE SEQUENCE [LARGE SCALE GENOMIC DNA]</scope>
    <source>
        <strain>DSM 21510 / WK1</strain>
    </source>
</reference>
<organism>
    <name type="scientific">Anoxybacillus flavithermus (strain DSM 21510 / WK1)</name>
    <dbReference type="NCBI Taxonomy" id="491915"/>
    <lineage>
        <taxon>Bacteria</taxon>
        <taxon>Bacillati</taxon>
        <taxon>Bacillota</taxon>
        <taxon>Bacilli</taxon>
        <taxon>Bacillales</taxon>
        <taxon>Anoxybacillaceae</taxon>
        <taxon>Anoxybacillus</taxon>
    </lineage>
</organism>
<evidence type="ECO:0000255" key="1">
    <source>
        <dbReference type="HAMAP-Rule" id="MF_00321"/>
    </source>
</evidence>
<sequence length="193" mass="22071">MKITNVEMVISAVKQEQYPAGQLPEFALAGRSNVGKSSFINKMINRKNFARTSSKPGKTQTLNFYRINDAFYFVDVPGYGFAKVSKTEREAWGKMIETYFTTREQLKAALLIVDLRHPPTKDDVMMYEFLKHYNIPTLVIATKADKIPRGKWQQHAKVAKETLRLISDDELIIFSAETGQGKDEAWGALQKWM</sequence>
<comment type="function">
    <text evidence="1">Necessary for normal cell division and for the maintenance of normal septation.</text>
</comment>
<comment type="cofactor">
    <cofactor evidence="1">
        <name>Mg(2+)</name>
        <dbReference type="ChEBI" id="CHEBI:18420"/>
    </cofactor>
</comment>
<comment type="similarity">
    <text evidence="1">Belongs to the TRAFAC class TrmE-Era-EngA-EngB-Septin-like GTPase superfamily. EngB GTPase family.</text>
</comment>
<feature type="chain" id="PRO_1000119588" description="Probable GTP-binding protein EngB">
    <location>
        <begin position="1"/>
        <end position="193"/>
    </location>
</feature>
<feature type="domain" description="EngB-type G" evidence="1">
    <location>
        <begin position="22"/>
        <end position="193"/>
    </location>
</feature>
<feature type="binding site" evidence="1">
    <location>
        <begin position="30"/>
        <end position="37"/>
    </location>
    <ligand>
        <name>GTP</name>
        <dbReference type="ChEBI" id="CHEBI:37565"/>
    </ligand>
</feature>
<feature type="binding site" evidence="1">
    <location>
        <position position="37"/>
    </location>
    <ligand>
        <name>Mg(2+)</name>
        <dbReference type="ChEBI" id="CHEBI:18420"/>
    </ligand>
</feature>
<feature type="binding site" evidence="1">
    <location>
        <begin position="57"/>
        <end position="61"/>
    </location>
    <ligand>
        <name>GTP</name>
        <dbReference type="ChEBI" id="CHEBI:37565"/>
    </ligand>
</feature>
<feature type="binding site" evidence="1">
    <location>
        <position position="59"/>
    </location>
    <ligand>
        <name>Mg(2+)</name>
        <dbReference type="ChEBI" id="CHEBI:18420"/>
    </ligand>
</feature>
<feature type="binding site" evidence="1">
    <location>
        <begin position="75"/>
        <end position="78"/>
    </location>
    <ligand>
        <name>GTP</name>
        <dbReference type="ChEBI" id="CHEBI:37565"/>
    </ligand>
</feature>
<feature type="binding site" evidence="1">
    <location>
        <begin position="142"/>
        <end position="145"/>
    </location>
    <ligand>
        <name>GTP</name>
        <dbReference type="ChEBI" id="CHEBI:37565"/>
    </ligand>
</feature>
<feature type="binding site" evidence="1">
    <location>
        <begin position="174"/>
        <end position="176"/>
    </location>
    <ligand>
        <name>GTP</name>
        <dbReference type="ChEBI" id="CHEBI:37565"/>
    </ligand>
</feature>
<accession>B7GH28</accession>
<keyword id="KW-0131">Cell cycle</keyword>
<keyword id="KW-0132">Cell division</keyword>
<keyword id="KW-0342">GTP-binding</keyword>
<keyword id="KW-0460">Magnesium</keyword>
<keyword id="KW-0479">Metal-binding</keyword>
<keyword id="KW-0547">Nucleotide-binding</keyword>
<keyword id="KW-0717">Septation</keyword>